<proteinExistence type="evidence at transcript level"/>
<comment type="function">
    <text evidence="1">Component of the BRCA1-A complex, a complex that specifically recognizes 'Lys-63'-linked ubiquitinated histones H2A and H2AX at DNA lesions sites, leading to target the BRCA1-BARD1 heterodimer to sites of DNA damage at double-strand breaks (DSBs). The BRCA1-A complex also possesses deubiquitinase activity that specifically removes 'Lys-63'-linked ubiquitin on histones H2A and H2AX. In the BRCA1-A complex, it acts as an adapter that bridges the interaction between BABAM1/NBA1 and the rest of the complex, thereby being required for the complex integrity and modulating the E3 ubiquitin ligase activity of the BRCA1-BARD1 heterodimer. Component of the BRISC complex, a multiprotein complex that specifically cleaves 'Lys-63'-linked ubiquitin in various substrates. Within the BRISC complex, acts as an adapter that bridges the interaction between BABAM1/NBA1 and the rest of the complex, thereby being required for the complex integrity. The BRISC complex is required for normal mitotic spindle assembly and microtubule attachment to kinetochores via its role in deubiquitinating NUMA1. The BRISC complex plays a role in interferon signaling via its role in the deubiquitination of the interferon receptor IFNAR1; deubiquitination increases IFNAR1 activity by enhancing its stability and cell surface expression. Down-regulates the response to bacterial lipopolysaccharide (LPS) via its role in IFNAR1 deubiquitination. May play a role in homeostasis or cellular differentiation in cells of neural, epithelial and germline origins. May also act as a death receptor-associated anti-apoptotic protein, which inhibits the mitochondrial apoptotic pathway. May regulate TNF-alpha signaling through its interactions with TNFRSF1A; however these effects may be indirect.</text>
</comment>
<comment type="subunit">
    <text evidence="1">Component of the ARISC complex, at least composed of UIMC1/RAP80, ABRAXAS1, BRCC3/BRCC36, BABAM2 and BABAM1/NBA1. Component of the BRCA1-A complex, at least composed of BRCA1, BARD1, UIMC1/RAP80, ABRAXAS1, BRCC3/BRCC36, BABAM2 and BABAM1/NBA1. In the BRCA1-A complex, interacts directly with ABRAXAS1, BRCC3/BRCC36 and BABAM1/NBA1. Binds polyubiquitin. Component of the BRISC complex, at least composed of ABRAXAS2, BRCC3/BRCC36, BABAM2 and BABAM1/NBA1. Identified in a complex with SHMT2 and the other subunits of the BRISC complex. Component of the BRCA1/BRCA2 containing complex (BRCC), which also contains BRCA1, BRCA2, BARD1, BRCC3/BRCC36 and RAD51. BRCC is a ubiquitin E3 ligase complex that enhances cellular survival following DNA damage. May interact with FAS and TNFRSF1A.</text>
</comment>
<comment type="subcellular location">
    <subcellularLocation>
        <location evidence="1">Cytoplasm</location>
    </subcellularLocation>
    <subcellularLocation>
        <location evidence="1">Nucleus</location>
    </subcellularLocation>
    <text evidence="1">Localizes at sites of DNA damage at double-strand breaks (DSBs).</text>
</comment>
<comment type="domain">
    <text evidence="1">Contains 2 ubiquitin-conjugating enzyme family-like (UEV-like) regions. These regions lack the critical Cys residues required for ubiquitination but retain the ability to bind ubiquitin.</text>
</comment>
<comment type="similarity">
    <text evidence="2">Belongs to the BABAM2 family.</text>
</comment>
<gene>
    <name type="primary">BABAM2</name>
    <name type="synonym">BRE</name>
</gene>
<accession>Q8WN69</accession>
<organism>
    <name type="scientific">Chlorocebus aethiops</name>
    <name type="common">Green monkey</name>
    <name type="synonym">Cercopithecus aethiops</name>
    <dbReference type="NCBI Taxonomy" id="9534"/>
    <lineage>
        <taxon>Eukaryota</taxon>
        <taxon>Metazoa</taxon>
        <taxon>Chordata</taxon>
        <taxon>Craniata</taxon>
        <taxon>Vertebrata</taxon>
        <taxon>Euteleostomi</taxon>
        <taxon>Mammalia</taxon>
        <taxon>Eutheria</taxon>
        <taxon>Euarchontoglires</taxon>
        <taxon>Primates</taxon>
        <taxon>Haplorrhini</taxon>
        <taxon>Catarrhini</taxon>
        <taxon>Cercopithecidae</taxon>
        <taxon>Cercopithecinae</taxon>
        <taxon>Chlorocebus</taxon>
    </lineage>
</organism>
<name>BABA2_CHLAE</name>
<protein>
    <recommendedName>
        <fullName>BRISC and BRCA1-A complex member 2</fullName>
    </recommendedName>
    <alternativeName>
        <fullName>BRCA1-A complex subunit BRE</fullName>
    </alternativeName>
    <alternativeName>
        <fullName>BRCA1/BRCA2-containing complex subunit 45</fullName>
    </alternativeName>
    <alternativeName>
        <fullName>Brain and reproductive organ-expressed protein</fullName>
    </alternativeName>
</protein>
<reference key="1">
    <citation type="submission" date="2001-10" db="EMBL/GenBank/DDBJ databases">
        <title>Comparison of mouse and primate BRE sequences.</title>
        <authorList>
            <person name="Ching A.K.K."/>
            <person name="Chui Y.L."/>
        </authorList>
    </citation>
    <scope>NUCLEOTIDE SEQUENCE [MRNA]</scope>
</reference>
<sequence>MSPEVALNRISPMLSPFISSVVRNGKVGLDATNCLRITDLKSGCTSLTPGPNCDRFKLHIPYAGETLKWDIIFNAQYPELPPDFIFGEDVEFLPDPSALQNLASWNPSNPECLLLVVKELVQQYHQFQCSRLRESSRLMFEYQTLLEEPQYGENMEIYAGKKNNWTGEFSARFLLKLPVDFSNIPTYLLKDVNEDPGEDVALLSVSFEDTEATQVYPKLYLSPRIEHALGGSSALHIPAFPGGGCLIDYVPQVCHLLTNKVQYVIQGYHKRREYIAAFLSHFGTGVVEYDAEGFTKLTLLLMWKDFCFLVHIDLPLFFPRDQPTLTFQSVYHFTNSGQLYSQAQKNYPYSPRWDGNEMAKRAKAYFKTFVPQFQEAAFANGKL</sequence>
<keyword id="KW-0007">Acetylation</keyword>
<keyword id="KW-0053">Apoptosis</keyword>
<keyword id="KW-0131">Cell cycle</keyword>
<keyword id="KW-0132">Cell division</keyword>
<keyword id="KW-0156">Chromatin regulator</keyword>
<keyword id="KW-0963">Cytoplasm</keyword>
<keyword id="KW-0227">DNA damage</keyword>
<keyword id="KW-0234">DNA repair</keyword>
<keyword id="KW-0498">Mitosis</keyword>
<keyword id="KW-0539">Nucleus</keyword>
<keyword id="KW-0597">Phosphoprotein</keyword>
<keyword id="KW-0677">Repeat</keyword>
<keyword id="KW-0833">Ubl conjugation pathway</keyword>
<feature type="chain" id="PRO_0000373931" description="BRISC and BRCA1-A complex member 2">
    <location>
        <begin position="1"/>
        <end position="383"/>
    </location>
</feature>
<feature type="region of interest" description="UEV-like 1">
    <location>
        <begin position="30"/>
        <end position="147"/>
    </location>
</feature>
<feature type="region of interest" description="UEV-like 2">
    <location>
        <begin position="275"/>
        <end position="364"/>
    </location>
</feature>
<feature type="modified residue" description="N-acetylmethionine" evidence="1">
    <location>
        <position position="1"/>
    </location>
</feature>
<feature type="modified residue" description="Phosphoserine" evidence="1">
    <location>
        <position position="2"/>
    </location>
</feature>
<dbReference type="EMBL" id="AF440754">
    <property type="protein sequence ID" value="AAL40811.1"/>
    <property type="molecule type" value="mRNA"/>
</dbReference>
<dbReference type="SMR" id="Q8WN69"/>
<dbReference type="GO" id="GO:0070531">
    <property type="term" value="C:BRCA1-A complex"/>
    <property type="evidence" value="ECO:0000250"/>
    <property type="project" value="UniProtKB"/>
</dbReference>
<dbReference type="GO" id="GO:0070552">
    <property type="term" value="C:BRISC complex"/>
    <property type="evidence" value="ECO:0000250"/>
    <property type="project" value="UniProtKB"/>
</dbReference>
<dbReference type="GO" id="GO:0005737">
    <property type="term" value="C:cytoplasm"/>
    <property type="evidence" value="ECO:0000250"/>
    <property type="project" value="UniProtKB"/>
</dbReference>
<dbReference type="GO" id="GO:0005634">
    <property type="term" value="C:nucleus"/>
    <property type="evidence" value="ECO:0000250"/>
    <property type="project" value="UniProtKB"/>
</dbReference>
<dbReference type="GO" id="GO:0031593">
    <property type="term" value="F:polyubiquitin modification-dependent protein binding"/>
    <property type="evidence" value="ECO:0000250"/>
    <property type="project" value="UniProtKB"/>
</dbReference>
<dbReference type="GO" id="GO:0006915">
    <property type="term" value="P:apoptotic process"/>
    <property type="evidence" value="ECO:0007669"/>
    <property type="project" value="UniProtKB-KW"/>
</dbReference>
<dbReference type="GO" id="GO:0051301">
    <property type="term" value="P:cell division"/>
    <property type="evidence" value="ECO:0007669"/>
    <property type="project" value="UniProtKB-KW"/>
</dbReference>
<dbReference type="GO" id="GO:0006325">
    <property type="term" value="P:chromatin organization"/>
    <property type="evidence" value="ECO:0007669"/>
    <property type="project" value="UniProtKB-KW"/>
</dbReference>
<dbReference type="GO" id="GO:0006302">
    <property type="term" value="P:double-strand break repair"/>
    <property type="evidence" value="ECO:0000250"/>
    <property type="project" value="UniProtKB"/>
</dbReference>
<dbReference type="GO" id="GO:0007095">
    <property type="term" value="P:mitotic G2 DNA damage checkpoint signaling"/>
    <property type="evidence" value="ECO:0000250"/>
    <property type="project" value="UniProtKB"/>
</dbReference>
<dbReference type="GO" id="GO:0045739">
    <property type="term" value="P:positive regulation of DNA repair"/>
    <property type="evidence" value="ECO:0000250"/>
    <property type="project" value="UniProtKB"/>
</dbReference>
<dbReference type="GO" id="GO:0010212">
    <property type="term" value="P:response to ionizing radiation"/>
    <property type="evidence" value="ECO:0000250"/>
    <property type="project" value="UniProtKB"/>
</dbReference>
<dbReference type="CDD" id="cd23664">
    <property type="entry name" value="BRE"/>
    <property type="match status" value="1"/>
</dbReference>
<dbReference type="InterPro" id="IPR010358">
    <property type="entry name" value="BRE"/>
</dbReference>
<dbReference type="PANTHER" id="PTHR15189">
    <property type="entry name" value="BRISC AND BRCA1-A COMPLEX MEMBER 2"/>
    <property type="match status" value="1"/>
</dbReference>
<dbReference type="PANTHER" id="PTHR15189:SF7">
    <property type="entry name" value="BRISC AND BRCA1-A COMPLEX MEMBER 2"/>
    <property type="match status" value="1"/>
</dbReference>
<dbReference type="Pfam" id="PF06113">
    <property type="entry name" value="BRE"/>
    <property type="match status" value="1"/>
</dbReference>
<evidence type="ECO:0000250" key="1">
    <source>
        <dbReference type="UniProtKB" id="Q9NXR7"/>
    </source>
</evidence>
<evidence type="ECO:0000255" key="2"/>